<keyword id="KW-1185">Reference proteome</keyword>
<proteinExistence type="predicted"/>
<protein>
    <recommendedName>
        <fullName>Uncharacterized protein YchH</fullName>
    </recommendedName>
</protein>
<dbReference type="EMBL" id="X61941">
    <property type="protein sequence ID" value="CAA43947.1"/>
    <property type="molecule type" value="Genomic_DNA"/>
</dbReference>
<dbReference type="EMBL" id="U00096">
    <property type="protein sequence ID" value="AAC74289.1"/>
    <property type="molecule type" value="Genomic_DNA"/>
</dbReference>
<dbReference type="EMBL" id="AP009048">
    <property type="protein sequence ID" value="BAA36063.1"/>
    <property type="molecule type" value="Genomic_DNA"/>
</dbReference>
<dbReference type="PIR" id="B64867">
    <property type="entry name" value="B64867"/>
</dbReference>
<dbReference type="RefSeq" id="NP_415723.1">
    <property type="nucleotide sequence ID" value="NC_000913.3"/>
</dbReference>
<dbReference type="RefSeq" id="WP_000823885.1">
    <property type="nucleotide sequence ID" value="NZ_STEB01000023.1"/>
</dbReference>
<dbReference type="BioGRID" id="4260109">
    <property type="interactions" value="17"/>
</dbReference>
<dbReference type="BioGRID" id="850129">
    <property type="interactions" value="1"/>
</dbReference>
<dbReference type="FunCoup" id="P0AB49">
    <property type="interactions" value="41"/>
</dbReference>
<dbReference type="IntAct" id="P0AB49">
    <property type="interactions" value="1"/>
</dbReference>
<dbReference type="STRING" id="511145.b1205"/>
<dbReference type="PaxDb" id="511145-b1205"/>
<dbReference type="EnsemblBacteria" id="AAC74289">
    <property type="protein sequence ID" value="AAC74289"/>
    <property type="gene ID" value="b1205"/>
</dbReference>
<dbReference type="GeneID" id="93775270"/>
<dbReference type="GeneID" id="945762"/>
<dbReference type="KEGG" id="ecj:JW1196"/>
<dbReference type="KEGG" id="eco:b1205"/>
<dbReference type="KEGG" id="ecoc:C3026_07085"/>
<dbReference type="PATRIC" id="fig|1411691.4.peg.1079"/>
<dbReference type="EchoBASE" id="EB1495"/>
<dbReference type="eggNOG" id="ENOG5032TWR">
    <property type="taxonomic scope" value="Bacteria"/>
</dbReference>
<dbReference type="HOGENOM" id="CLU_187796_0_0_6"/>
<dbReference type="InParanoid" id="P0AB49"/>
<dbReference type="OMA" id="KRCRRDQ"/>
<dbReference type="OrthoDB" id="6494670at2"/>
<dbReference type="PhylomeDB" id="P0AB49"/>
<dbReference type="BioCyc" id="EcoCyc:EG11533-MONOMER"/>
<dbReference type="PRO" id="PR:P0AB49"/>
<dbReference type="Proteomes" id="UP000000625">
    <property type="component" value="Chromosome"/>
</dbReference>
<dbReference type="GO" id="GO:0071276">
    <property type="term" value="P:cellular response to cadmium ion"/>
    <property type="evidence" value="ECO:0000315"/>
    <property type="project" value="EcoCyc"/>
</dbReference>
<dbReference type="GO" id="GO:0070301">
    <property type="term" value="P:cellular response to hydrogen peroxide"/>
    <property type="evidence" value="ECO:0000315"/>
    <property type="project" value="EcoCyc"/>
</dbReference>
<dbReference type="GO" id="GO:0044011">
    <property type="term" value="P:single-species biofilm formation on inanimate substrate"/>
    <property type="evidence" value="ECO:0000315"/>
    <property type="project" value="EcoCyc"/>
</dbReference>
<dbReference type="InterPro" id="IPR019698">
    <property type="entry name" value="DUF2583"/>
</dbReference>
<dbReference type="NCBIfam" id="NF007968">
    <property type="entry name" value="PRK10692.1"/>
    <property type="match status" value="1"/>
</dbReference>
<dbReference type="Pfam" id="PF10762">
    <property type="entry name" value="DUF2583"/>
    <property type="match status" value="1"/>
</dbReference>
<sequence>MKRKNASLLGNVLMGLGLVVMVVGVGYSILNQLPQFNMPQYFAHGAVLSIFVGAILWLAGARVGGHEQVCDRYWWVRHYDKRCRRSDNRRHS</sequence>
<name>YCHH_ECOLI</name>
<feature type="chain" id="PRO_0000168867" description="Uncharacterized protein YchH">
    <location>
        <begin position="1"/>
        <end position="92"/>
    </location>
</feature>
<organism>
    <name type="scientific">Escherichia coli (strain K12)</name>
    <dbReference type="NCBI Taxonomy" id="83333"/>
    <lineage>
        <taxon>Bacteria</taxon>
        <taxon>Pseudomonadati</taxon>
        <taxon>Pseudomonadota</taxon>
        <taxon>Gammaproteobacteria</taxon>
        <taxon>Enterobacterales</taxon>
        <taxon>Enterobacteriaceae</taxon>
        <taxon>Escherichia</taxon>
    </lineage>
</organism>
<gene>
    <name type="primary">ychH</name>
    <name type="ordered locus">b1205</name>
    <name type="ordered locus">JW1196</name>
</gene>
<accession>P0AB49</accession>
<accession>P31807</accession>
<reference key="1">
    <citation type="journal article" date="1991" name="EMBO J.">
        <title>Peptidyl-tRNA hydrolase is involved in lambda inhibition of host protein synthesis.</title>
        <authorList>
            <person name="Garcia-Villegas M.R."/>
            <person name="de la Vega F.M."/>
            <person name="Galindo J.M."/>
            <person name="Segura M."/>
            <person name="Buckingham R.H."/>
            <person name="Guarneros G."/>
        </authorList>
    </citation>
    <scope>NUCLEOTIDE SEQUENCE [GENOMIC DNA]</scope>
    <source>
        <strain>K12</strain>
    </source>
</reference>
<reference key="2">
    <citation type="journal article" date="1994" name="Gene">
        <title>Open reading frames flanking the peptidyl-tRNA hydrolase-encoding gene of Escherichia coli.</title>
        <authorList>
            <person name="Galindo J.M."/>
            <person name="de la Vega F.M."/>
            <person name="Guarneros G."/>
        </authorList>
    </citation>
    <scope>SEQUENCE REVISION</scope>
    <source>
        <strain>K12</strain>
    </source>
</reference>
<reference key="3">
    <citation type="journal article" date="1996" name="DNA Res.">
        <title>A 718-kb DNA sequence of the Escherichia coli K-12 genome corresponding to the 12.7-28.0 min region on the linkage map.</title>
        <authorList>
            <person name="Oshima T."/>
            <person name="Aiba H."/>
            <person name="Baba T."/>
            <person name="Fujita K."/>
            <person name="Hayashi K."/>
            <person name="Honjo A."/>
            <person name="Ikemoto K."/>
            <person name="Inada T."/>
            <person name="Itoh T."/>
            <person name="Kajihara M."/>
            <person name="Kanai K."/>
            <person name="Kashimoto K."/>
            <person name="Kimura S."/>
            <person name="Kitagawa M."/>
            <person name="Makino K."/>
            <person name="Masuda S."/>
            <person name="Miki T."/>
            <person name="Mizobuchi K."/>
            <person name="Mori H."/>
            <person name="Motomura K."/>
            <person name="Nakamura Y."/>
            <person name="Nashimoto H."/>
            <person name="Nishio Y."/>
            <person name="Saito N."/>
            <person name="Sampei G."/>
            <person name="Seki Y."/>
            <person name="Tagami H."/>
            <person name="Takemoto K."/>
            <person name="Wada C."/>
            <person name="Yamamoto Y."/>
            <person name="Yano M."/>
            <person name="Horiuchi T."/>
        </authorList>
    </citation>
    <scope>NUCLEOTIDE SEQUENCE [LARGE SCALE GENOMIC DNA]</scope>
    <source>
        <strain>K12 / W3110 / ATCC 27325 / DSM 5911</strain>
    </source>
</reference>
<reference key="4">
    <citation type="journal article" date="1997" name="Science">
        <title>The complete genome sequence of Escherichia coli K-12.</title>
        <authorList>
            <person name="Blattner F.R."/>
            <person name="Plunkett G. III"/>
            <person name="Bloch C.A."/>
            <person name="Perna N.T."/>
            <person name="Burland V."/>
            <person name="Riley M."/>
            <person name="Collado-Vides J."/>
            <person name="Glasner J.D."/>
            <person name="Rode C.K."/>
            <person name="Mayhew G.F."/>
            <person name="Gregor J."/>
            <person name="Davis N.W."/>
            <person name="Kirkpatrick H.A."/>
            <person name="Goeden M.A."/>
            <person name="Rose D.J."/>
            <person name="Mau B."/>
            <person name="Shao Y."/>
        </authorList>
    </citation>
    <scope>NUCLEOTIDE SEQUENCE [LARGE SCALE GENOMIC DNA]</scope>
    <source>
        <strain>K12 / MG1655 / ATCC 47076</strain>
    </source>
</reference>
<reference key="5">
    <citation type="journal article" date="2006" name="Mol. Syst. Biol.">
        <title>Highly accurate genome sequences of Escherichia coli K-12 strains MG1655 and W3110.</title>
        <authorList>
            <person name="Hayashi K."/>
            <person name="Morooka N."/>
            <person name="Yamamoto Y."/>
            <person name="Fujita K."/>
            <person name="Isono K."/>
            <person name="Choi S."/>
            <person name="Ohtsubo E."/>
            <person name="Baba T."/>
            <person name="Wanner B.L."/>
            <person name="Mori H."/>
            <person name="Horiuchi T."/>
        </authorList>
    </citation>
    <scope>NUCLEOTIDE SEQUENCE [LARGE SCALE GENOMIC DNA]</scope>
    <source>
        <strain>K12 / W3110 / ATCC 27325 / DSM 5911</strain>
    </source>
</reference>